<protein>
    <recommendedName>
        <fullName>Calcium-activated potassium channel subunit alpha-1</fullName>
    </recommendedName>
    <alternativeName>
        <fullName>BK channel</fullName>
    </alternativeName>
    <alternativeName>
        <fullName>BKCA alpha</fullName>
    </alternativeName>
    <alternativeName>
        <fullName>Calcium-activated potassium channel, subfamily M subunit alpha-1</fullName>
    </alternativeName>
    <alternativeName>
        <fullName>K(VCA)alpha</fullName>
    </alternativeName>
    <alternativeName>
        <fullName>KCa1.1</fullName>
    </alternativeName>
    <alternativeName>
        <fullName>Maxi K channel</fullName>
        <shortName>MaxiK</shortName>
    </alternativeName>
    <alternativeName>
        <fullName>Slo-alpha</fullName>
    </alternativeName>
    <alternativeName>
        <fullName>Slo1</fullName>
    </alternativeName>
    <alternativeName>
        <fullName>Slowpoke homolog</fullName>
        <shortName>Slo homolog</shortName>
    </alternativeName>
</protein>
<keyword id="KW-0025">Alternative splicing</keyword>
<keyword id="KW-0106">Calcium</keyword>
<keyword id="KW-1003">Cell membrane</keyword>
<keyword id="KW-0407">Ion channel</keyword>
<keyword id="KW-0406">Ion transport</keyword>
<keyword id="KW-0449">Lipoprotein</keyword>
<keyword id="KW-0460">Magnesium</keyword>
<keyword id="KW-0472">Membrane</keyword>
<keyword id="KW-0479">Metal-binding</keyword>
<keyword id="KW-0564">Palmitate</keyword>
<keyword id="KW-0597">Phosphoprotein</keyword>
<keyword id="KW-0630">Potassium</keyword>
<keyword id="KW-0631">Potassium channel</keyword>
<keyword id="KW-0633">Potassium transport</keyword>
<keyword id="KW-1185">Reference proteome</keyword>
<keyword id="KW-0812">Transmembrane</keyword>
<keyword id="KW-1133">Transmembrane helix</keyword>
<keyword id="KW-0813">Transport</keyword>
<keyword id="KW-0851">Voltage-gated channel</keyword>
<feature type="chain" id="PRO_0000054133" description="Calcium-activated potassium channel subunit alpha-1">
    <location>
        <begin position="1" status="less than"/>
        <end position="1151"/>
    </location>
</feature>
<feature type="topological domain" description="Extracellular" evidence="6">
    <location>
        <begin position="1" status="less than"/>
        <end position="59"/>
    </location>
</feature>
<feature type="transmembrane region" description="Helical; Name=Segment S0" evidence="6">
    <location>
        <begin position="60"/>
        <end position="80"/>
    </location>
</feature>
<feature type="topological domain" description="Cytoplasmic" evidence="6">
    <location>
        <begin position="81"/>
        <end position="151"/>
    </location>
</feature>
<feature type="transmembrane region" description="Helical; Name=Segment S1" evidence="6">
    <location>
        <begin position="152"/>
        <end position="172"/>
    </location>
</feature>
<feature type="topological domain" description="Extracellular" evidence="6">
    <location>
        <begin position="173"/>
        <end position="187"/>
    </location>
</feature>
<feature type="transmembrane region" description="Helical; Name=Segment S2" evidence="6">
    <location>
        <begin position="188"/>
        <end position="208"/>
    </location>
</feature>
<feature type="topological domain" description="Cytoplasmic" evidence="6">
    <location>
        <begin position="209"/>
        <end position="212"/>
    </location>
</feature>
<feature type="transmembrane region" description="Helical; Name=Segment S3" evidence="6">
    <location>
        <begin position="213"/>
        <end position="233"/>
    </location>
</feature>
<feature type="topological domain" description="Extracellular" evidence="6">
    <location>
        <begin position="234"/>
        <end position="237"/>
    </location>
</feature>
<feature type="transmembrane region" description="Helical; Voltage-sensor; Name=Segment S4" evidence="6">
    <location>
        <begin position="238"/>
        <end position="258"/>
    </location>
</feature>
<feature type="topological domain" description="Cytoplasmic" evidence="6">
    <location>
        <begin position="259"/>
        <end position="273"/>
    </location>
</feature>
<feature type="transmembrane region" description="Helical; Name=Segment S5" evidence="6">
    <location>
        <begin position="274"/>
        <end position="294"/>
    </location>
</feature>
<feature type="topological domain" description="Extracellular" evidence="6">
    <location>
        <begin position="295"/>
        <end position="308"/>
    </location>
</feature>
<feature type="intramembrane region" description="Pore-forming; Name=P region" evidence="6">
    <location>
        <begin position="309"/>
        <end position="331"/>
    </location>
</feature>
<feature type="topological domain" description="Extracellular" evidence="6">
    <location>
        <begin position="332"/>
        <end position="340"/>
    </location>
</feature>
<feature type="transmembrane region" description="Helical; Name=Segment S6" evidence="6">
    <location>
        <begin position="341"/>
        <end position="361"/>
    </location>
</feature>
<feature type="topological domain" description="Cytoplasmic" evidence="6">
    <location>
        <begin position="362"/>
        <end position="1151"/>
    </location>
</feature>
<feature type="domain" description="RCK N-terminal 1" evidence="7">
    <location>
        <begin position="380"/>
        <end position="522"/>
    </location>
</feature>
<feature type="domain" description="RCK N-terminal 2" evidence="7">
    <location>
        <begin position="754"/>
        <end position="898"/>
    </location>
</feature>
<feature type="region of interest" description="Disordered" evidence="8">
    <location>
        <begin position="1"/>
        <end position="36"/>
    </location>
</feature>
<feature type="region of interest" description="Segment S7">
    <location>
        <begin position="529"/>
        <end position="549"/>
    </location>
</feature>
<feature type="region of interest" description="Segment S8">
    <location>
        <begin position="586"/>
        <end position="606"/>
    </location>
</feature>
<feature type="region of interest" description="Heme-binding motif" evidence="4">
    <location>
        <begin position="650"/>
        <end position="654"/>
    </location>
</feature>
<feature type="region of interest" description="Disordered" evidence="8">
    <location>
        <begin position="674"/>
        <end position="702"/>
    </location>
</feature>
<feature type="region of interest" description="Segment S9">
    <location>
        <begin position="752"/>
        <end position="772"/>
    </location>
</feature>
<feature type="region of interest" description="Segment S10">
    <location>
        <begin position="947"/>
        <end position="967"/>
    </location>
</feature>
<feature type="region of interest" description="Disordered" evidence="8">
    <location>
        <begin position="1101"/>
        <end position="1151"/>
    </location>
</feature>
<feature type="short sequence motif" description="Selectivity for potassium">
    <location>
        <begin position="325"/>
        <end position="328"/>
    </location>
</feature>
<feature type="short sequence motif" description="Calcium bowl" evidence="2">
    <location>
        <begin position="918"/>
        <end position="940"/>
    </location>
</feature>
<feature type="compositionally biased region" description="Low complexity" evidence="8">
    <location>
        <begin position="15"/>
        <end position="33"/>
    </location>
</feature>
<feature type="compositionally biased region" description="Low complexity" evidence="8">
    <location>
        <begin position="1101"/>
        <end position="1126"/>
    </location>
</feature>
<feature type="compositionally biased region" description="Basic and acidic residues" evidence="8">
    <location>
        <begin position="1135"/>
        <end position="1151"/>
    </location>
</feature>
<feature type="binding site" evidence="9">
    <location>
        <position position="412"/>
    </location>
    <ligand>
        <name>Mg(2+)</name>
        <dbReference type="ChEBI" id="CHEBI:18420"/>
    </ligand>
</feature>
<feature type="binding site" evidence="9">
    <location>
        <position position="435"/>
    </location>
    <ligand>
        <name>Mg(2+)</name>
        <dbReference type="ChEBI" id="CHEBI:18420"/>
    </ligand>
</feature>
<feature type="binding site" evidence="9">
    <location>
        <position position="437"/>
    </location>
    <ligand>
        <name>Mg(2+)</name>
        <dbReference type="ChEBI" id="CHEBI:18420"/>
    </ligand>
</feature>
<feature type="binding site" evidence="2">
    <location>
        <position position="927"/>
    </location>
    <ligand>
        <name>Ca(2+)</name>
        <dbReference type="ChEBI" id="CHEBI:29108"/>
    </ligand>
</feature>
<feature type="binding site" evidence="2">
    <location>
        <position position="930"/>
    </location>
    <ligand>
        <name>Ca(2+)</name>
        <dbReference type="ChEBI" id="CHEBI:29108"/>
    </ligand>
</feature>
<feature type="binding site" evidence="2">
    <location>
        <position position="933"/>
    </location>
    <ligand>
        <name>Ca(2+)</name>
        <dbReference type="ChEBI" id="CHEBI:29108"/>
    </ligand>
</feature>
<feature type="binding site" evidence="2">
    <location>
        <position position="935"/>
    </location>
    <ligand>
        <name>Ca(2+)</name>
        <dbReference type="ChEBI" id="CHEBI:29108"/>
    </ligand>
</feature>
<feature type="modified residue" description="Phosphothreonine" evidence="3">
    <location>
        <position position="678"/>
    </location>
</feature>
<feature type="modified residue" description="Phosphoserine" evidence="3">
    <location>
        <position position="680"/>
    </location>
</feature>
<feature type="modified residue" description="Phosphoserine" evidence="3">
    <location>
        <position position="693"/>
    </location>
</feature>
<feature type="modified residue" description="Phosphoserine" evidence="3">
    <location>
        <position position="697"/>
    </location>
</feature>
<feature type="modified residue" description="Phosphothreonine" evidence="3">
    <location>
        <position position="885"/>
    </location>
</feature>
<feature type="modified residue" description="Phosphoserine" evidence="3">
    <location>
        <position position="893"/>
    </location>
</feature>
<feature type="modified residue" description="Phosphoserine" evidence="3">
    <location>
        <position position="897"/>
    </location>
</feature>
<feature type="modified residue" description="Phosphoserine" evidence="5">
    <location>
        <position position="1136"/>
    </location>
</feature>
<feature type="modified residue" description="Phosphoserine" evidence="5">
    <location>
        <position position="1139"/>
    </location>
</feature>
<feature type="lipid moiety-binding region" description="S-palmitoyl cysteine" evidence="4">
    <location>
        <position position="91"/>
    </location>
</feature>
<feature type="lipid moiety-binding region" description="S-palmitoyl cysteine" evidence="4">
    <location>
        <position position="92"/>
    </location>
</feature>
<feature type="lipid moiety-binding region" description="S-palmitoyl cysteine" evidence="4">
    <location>
        <position position="94"/>
    </location>
</feature>
<feature type="non-terminal residue">
    <location>
        <position position="1"/>
    </location>
</feature>
<name>KCMA1_MACMU</name>
<comment type="function">
    <text evidence="4">Potassium channel activated by both membrane depolarization or increase in cytosolic Ca(2+) that mediates export of K(+). It is also activated by the concentration of cytosolic Mg(2+). Its activation dampens the excitatory events that elevate the cytosolic Ca(2+) concentration and/or depolarize the cell membrane. It therefore contributes to repolarization of the membrane potential. Plays a key role in controlling excitability in a number of systems, such as regulation of the contraction of smooth muscle, the tuning of hair cells in the cochlea, regulation of transmitter release, and innate immunity. In smooth muscles, its activation by high level of Ca(2+), caused by ryanodine receptors in the sarcoplasmic reticulum, regulates the membrane potential. In cochlea cells, its number and kinetic properties partly determine the characteristic frequency of each hair cell and thereby helps to establish a tonotopic map. Kinetics of KCNMA1 channels are determined by alternative splicing, phosphorylation status and its combination with modulating beta subunits. Highly sensitive to both iberiotoxin (IbTx) and charybdotoxin (CTX) (By similarity).</text>
</comment>
<comment type="catalytic activity">
    <reaction evidence="4">
        <text>K(+)(in) = K(+)(out)</text>
        <dbReference type="Rhea" id="RHEA:29463"/>
        <dbReference type="ChEBI" id="CHEBI:29103"/>
    </reaction>
</comment>
<comment type="activity regulation">
    <text evidence="4">Ethanol and carbon monoxide-bound heme increase channel activation. Heme inhibits channel activation (By similarity).</text>
</comment>
<comment type="subunit">
    <text evidence="3 4">Homotetramer; which constitutes the calcium-activated potassium channel. Interacts with beta subunits KCNMB1, KCNMB2, KCNMB3 and KCNMB4. Interacts with gamma subunits LRRC26, LRRC38, LRRC52 and LRRC55. Beta and gamma subunits are accessory, and modulate its activity. Interacts with RAB11B (By similarity).</text>
</comment>
<comment type="subcellular location">
    <subcellularLocation>
        <location evidence="4">Cell membrane</location>
        <topology evidence="6">Multi-pass membrane protein</topology>
    </subcellularLocation>
</comment>
<comment type="alternative products">
    <event type="alternative splicing"/>
    <isoform>
        <id>O18867-1</id>
        <name>1</name>
        <sequence type="displayed"/>
    </isoform>
    <text>May be partially controlled by hormonal stress. A number of isoforms are produced.</text>
</comment>
<comment type="domain">
    <text evidence="4">The S0 segment is essential for the modulation by the accessory beta subunits KCNMB1, KCNMB2, KCNMB3 and KCNMB4.</text>
</comment>
<comment type="domain">
    <text evidence="4">The S4 segment, which is characterized by a series of positively charged amino acids at every third position, is part of the voltage-sensor.</text>
</comment>
<comment type="domain">
    <text evidence="4">The pore-forming domain (also referred as P region) is imbedded into the membrane, and forms the selectivity filter of the pore. It contains the signature sequence of potassium channels that displays selectivity to potassium (By similarity).</text>
</comment>
<comment type="domain">
    <text evidence="1">The RCK N-terminal domain mediates the homotetramerization, thereby promoting the assembly of monomers into functional potassium channel. It includes binding sites for Ca(2+) and Mg(2+) (By similarity).</text>
</comment>
<comment type="domain">
    <text evidence="4">The heme-binding motif mediates inhibition of channel activation by heme. Carbon monoxide-bound heme leads to increased channel activation (By similarity).</text>
</comment>
<comment type="domain">
    <text evidence="2">The calcium bowl constitutes one of the Ca(2+) sensors and probably acts as a Ca(2+)-binding site. There are however other Ca(2+) sensor regions required for activation of the channel.</text>
</comment>
<comment type="PTM">
    <text evidence="4 9">Phosphorylated (Probable). Phosphorylation by kinases such as PKA and/or PKG. In smooth muscles, phosphorylation affects its activity (By similarity).</text>
</comment>
<comment type="PTM">
    <text evidence="4">Palmitoylation by ZDHHC22 and ZDHHC23 within the intracellular linker between the S0 and S1 transmembrane domains regulates localization to the plasma membrane. Depalmitoylated by LYPLA1 and LYPLAL1, leading to retard exit from the trans-Golgi network (By similarity).</text>
</comment>
<comment type="miscellaneous">
    <text>The protein was initially thought to contain two functionally distinct parts: The core channel (from the N-terminus to the S9 segment) that mediates the channel activity, and the cytoplasmic tail (from the S9 segment to the C-terminus) that mediates the calcium sensing. The situation is however more complex, since the core channel contains binding sites for Ca(2+) and Mg(2+).</text>
</comment>
<comment type="similarity">
    <text evidence="9">Belongs to the potassium channel family. Calcium-activated (TC 1.A.1.3) subfamily. KCa1.1/KCNMA1 sub-subfamily.</text>
</comment>
<dbReference type="EMBL" id="AF026001">
    <property type="protein sequence ID" value="AAB88804.1"/>
    <property type="molecule type" value="mRNA"/>
</dbReference>
<dbReference type="RefSeq" id="NP_001027982.1">
    <molecule id="O18867-1"/>
    <property type="nucleotide sequence ID" value="NM_001032810.1"/>
</dbReference>
<dbReference type="BMRB" id="O18867"/>
<dbReference type="SMR" id="O18867"/>
<dbReference type="STRING" id="9544.ENSMMUP00000024196"/>
<dbReference type="PaxDb" id="9544-ENSMMUP00000024196"/>
<dbReference type="GeneID" id="574103"/>
<dbReference type="KEGG" id="mcc:574103"/>
<dbReference type="CTD" id="3778"/>
<dbReference type="eggNOG" id="KOG1420">
    <property type="taxonomic scope" value="Eukaryota"/>
</dbReference>
<dbReference type="HOGENOM" id="CLU_006846_0_0_1"/>
<dbReference type="InParanoid" id="O18867"/>
<dbReference type="OrthoDB" id="10035564at2759"/>
<dbReference type="Proteomes" id="UP000006718">
    <property type="component" value="Unassembled WGS sequence"/>
</dbReference>
<dbReference type="GO" id="GO:0034702">
    <property type="term" value="C:monoatomic ion channel complex"/>
    <property type="evidence" value="ECO:0007669"/>
    <property type="project" value="UniProtKB-KW"/>
</dbReference>
<dbReference type="GO" id="GO:0045211">
    <property type="term" value="C:postsynaptic membrane"/>
    <property type="evidence" value="ECO:0000318"/>
    <property type="project" value="GO_Central"/>
</dbReference>
<dbReference type="GO" id="GO:0015269">
    <property type="term" value="F:calcium-activated potassium channel activity"/>
    <property type="evidence" value="ECO:0000250"/>
    <property type="project" value="UniProtKB"/>
</dbReference>
<dbReference type="GO" id="GO:0060072">
    <property type="term" value="F:large conductance calcium-activated potassium channel activity"/>
    <property type="evidence" value="ECO:0000318"/>
    <property type="project" value="GO_Central"/>
</dbReference>
<dbReference type="GO" id="GO:0046872">
    <property type="term" value="F:metal ion binding"/>
    <property type="evidence" value="ECO:0007669"/>
    <property type="project" value="UniProtKB-KW"/>
</dbReference>
<dbReference type="GO" id="GO:0005249">
    <property type="term" value="F:voltage-gated potassium channel activity"/>
    <property type="evidence" value="ECO:0000250"/>
    <property type="project" value="UniProtKB"/>
</dbReference>
<dbReference type="GO" id="GO:0071805">
    <property type="term" value="P:potassium ion transmembrane transport"/>
    <property type="evidence" value="ECO:0000318"/>
    <property type="project" value="GO_Central"/>
</dbReference>
<dbReference type="GO" id="GO:0042391">
    <property type="term" value="P:regulation of membrane potential"/>
    <property type="evidence" value="ECO:0000318"/>
    <property type="project" value="GO_Central"/>
</dbReference>
<dbReference type="GO" id="GO:0042311">
    <property type="term" value="P:vasodilation"/>
    <property type="evidence" value="ECO:0000318"/>
    <property type="project" value="GO_Central"/>
</dbReference>
<dbReference type="FunFam" id="3.40.50.720:FF:000098">
    <property type="entry name" value="calcium-activated potassium channel subunit alpha-1 isoform X3"/>
    <property type="match status" value="1"/>
</dbReference>
<dbReference type="FunFam" id="3.40.50.720:FF:000005">
    <property type="entry name" value="calcium-activated potassium channel subunit alpha-1 isoform X6"/>
    <property type="match status" value="1"/>
</dbReference>
<dbReference type="FunFam" id="1.10.287.70:FF:000015">
    <property type="entry name" value="Calcium-activated potassium channel subunit alpha-1 isoform X7"/>
    <property type="match status" value="1"/>
</dbReference>
<dbReference type="Gene3D" id="1.10.287.70">
    <property type="match status" value="1"/>
</dbReference>
<dbReference type="Gene3D" id="3.40.50.720">
    <property type="entry name" value="NAD(P)-binding Rossmann-like Domain"/>
    <property type="match status" value="2"/>
</dbReference>
<dbReference type="InterPro" id="IPR005821">
    <property type="entry name" value="Ion_trans_dom"/>
</dbReference>
<dbReference type="InterPro" id="IPR003929">
    <property type="entry name" value="K_chnl_BK_asu"/>
</dbReference>
<dbReference type="InterPro" id="IPR047871">
    <property type="entry name" value="K_chnl_Slo-like"/>
</dbReference>
<dbReference type="InterPro" id="IPR036291">
    <property type="entry name" value="NAD(P)-bd_dom_sf"/>
</dbReference>
<dbReference type="InterPro" id="IPR003148">
    <property type="entry name" value="RCK_N"/>
</dbReference>
<dbReference type="InterPro" id="IPR048735">
    <property type="entry name" value="Slowpoke-like_C"/>
</dbReference>
<dbReference type="PANTHER" id="PTHR10027">
    <property type="entry name" value="CALCIUM-ACTIVATED POTASSIUM CHANNEL ALPHA CHAIN"/>
    <property type="match status" value="1"/>
</dbReference>
<dbReference type="PANTHER" id="PTHR10027:SF40">
    <property type="entry name" value="CALCIUM-ACTIVATED POTASSIUM CHANNEL SUBUNIT ALPHA-1"/>
    <property type="match status" value="1"/>
</dbReference>
<dbReference type="Pfam" id="PF03493">
    <property type="entry name" value="BK_channel_a"/>
    <property type="match status" value="1"/>
</dbReference>
<dbReference type="Pfam" id="PF00520">
    <property type="entry name" value="Ion_trans"/>
    <property type="match status" value="1"/>
</dbReference>
<dbReference type="Pfam" id="PF22614">
    <property type="entry name" value="Slo-like_RCK"/>
    <property type="match status" value="2"/>
</dbReference>
<dbReference type="Pfam" id="PF21014">
    <property type="entry name" value="Slowpoke_C"/>
    <property type="match status" value="1"/>
</dbReference>
<dbReference type="PRINTS" id="PR01449">
    <property type="entry name" value="BKCHANNELA"/>
</dbReference>
<dbReference type="PRINTS" id="PR00169">
    <property type="entry name" value="KCHANNEL"/>
</dbReference>
<dbReference type="SUPFAM" id="SSF51735">
    <property type="entry name" value="NAD(P)-binding Rossmann-fold domains"/>
    <property type="match status" value="1"/>
</dbReference>
<dbReference type="SUPFAM" id="SSF81324">
    <property type="entry name" value="Voltage-gated potassium channels"/>
    <property type="match status" value="1"/>
</dbReference>
<dbReference type="PROSITE" id="PS51201">
    <property type="entry name" value="RCK_N"/>
    <property type="match status" value="2"/>
</dbReference>
<sequence>MSSNIHANHLSLDASSSSSSSSSSSSSSSSSSSVHEPKMDALIIPVTMEVPCDSRGQRMWWAFLASSMVTFFGGLFIILLWRTLKYLWTVCCHCGGKTKEAQKINNGSSQADGTLKPVDEKEEAVAAEVGWMTSVKDWAGVMISAQTLTGRVLVVLVFALSIGALVIYFIDSSNPIESCQNFYKDFTLQIDMAFNVFFLLYFGLRFIAANDKLWFWLEVNSVVDFFTVPPVFVSVYLNRSWLGLRFLRALRLIQFSEILQFLNILKTSNSIKLVNLLSIFISTWLTAAGFIHLVENSGDPWENFQNNQALTYWECVYLLMVTMSTVGYGDVYAKTTLGRLFMVFFILGGLAMFASYVPEIIELIGNRKKYGGSYSAVSGRKHIVVCGHITLESVSNFLKDFLHKDRDDVNVEIVFLHNISPNLELEALFKRHFTQVEFYQGSVLNPHDLARVKIESADACLILANKYCADPDAEDASNIMRVISIKNYHPKIRIITQMLQYHNKAHLLNIPSWNWKEGDDAICLAELKLGFIAQSCLAQGLSTMLANLFSMRSFIKIEEDTWQKYYLEGVSNEMYTEYLSSAFVGLSFPTVCELCFVKLKLLMIAIEYKSANRESRILINPGNHLKIQEGTLGFFIASDAKEVKRAFFYCKACHDDITDPKRIKKCGCKRLEDEQPSTLSPKKKQRNGGMRNSPNSSPKLMRHDPLLIPGNDQIDNMDSNVKKYDSTGMFHWCAPKEIEKVILTRSEAAMTVLSGHVVVCIFGDVSSALIGLRNLVMPLRASNFHYHELKHIVFVGSIEYLKREWETLHNFPKVSILPGTPLSRADLRAVNINLCDMCVILSANQNNIDDTSLQDKECILASLNIKSMQFDDSIGVLQANSQGFTPPGMDRSSPDNSPVHGMLRQPSITTGVNIPIITELVNDTNVQFLDQDDDDDPDTELYLTQPFACGTAFAVSVLDSLMSATYFNDNILTLIRTLVTGGATPELEALIAEENALRGGYSTPQTLANRDRCRVAQLALLDGPFADLGDGGCYGDLFCKALKTYNMLCFGIYRLRDAHLSTPSQCTKRYVITNPPYEFELVPTDLIFCLMQFDHNAGQSRASLSHSSHSSQSSSKKSSSVHSIPSTANRQNRPKSRESRDKQKYVQEERL</sequence>
<reference key="1">
    <citation type="journal article" date="1998" name="Curr. Eye Res.">
        <title>Ion transporters and receptors in cDNA libraries from lens and cornea epithelia.</title>
        <authorList>
            <person name="Shepard A.R."/>
            <person name="Rae J.L."/>
        </authorList>
    </citation>
    <scope>NUCLEOTIDE SEQUENCE [MRNA]</scope>
    <source>
        <tissue>Lens epithelium</tissue>
    </source>
</reference>
<organism>
    <name type="scientific">Macaca mulatta</name>
    <name type="common">Rhesus macaque</name>
    <dbReference type="NCBI Taxonomy" id="9544"/>
    <lineage>
        <taxon>Eukaryota</taxon>
        <taxon>Metazoa</taxon>
        <taxon>Chordata</taxon>
        <taxon>Craniata</taxon>
        <taxon>Vertebrata</taxon>
        <taxon>Euteleostomi</taxon>
        <taxon>Mammalia</taxon>
        <taxon>Eutheria</taxon>
        <taxon>Euarchontoglires</taxon>
        <taxon>Primates</taxon>
        <taxon>Haplorrhini</taxon>
        <taxon>Catarrhini</taxon>
        <taxon>Cercopithecidae</taxon>
        <taxon>Cercopithecinae</taxon>
        <taxon>Macaca</taxon>
    </lineage>
</organism>
<gene>
    <name type="primary">KCNMA1</name>
    <name type="synonym">KCNMA</name>
</gene>
<accession>O18867</accession>
<evidence type="ECO:0000250" key="1"/>
<evidence type="ECO:0000250" key="2">
    <source>
        <dbReference type="UniProtKB" id="B7ZC96"/>
    </source>
</evidence>
<evidence type="ECO:0000250" key="3">
    <source>
        <dbReference type="UniProtKB" id="Q08460"/>
    </source>
</evidence>
<evidence type="ECO:0000250" key="4">
    <source>
        <dbReference type="UniProtKB" id="Q12791"/>
    </source>
</evidence>
<evidence type="ECO:0000250" key="5">
    <source>
        <dbReference type="UniProtKB" id="Q28204"/>
    </source>
</evidence>
<evidence type="ECO:0000255" key="6"/>
<evidence type="ECO:0000255" key="7">
    <source>
        <dbReference type="PROSITE-ProRule" id="PRU00543"/>
    </source>
</evidence>
<evidence type="ECO:0000256" key="8">
    <source>
        <dbReference type="SAM" id="MobiDB-lite"/>
    </source>
</evidence>
<evidence type="ECO:0000305" key="9"/>
<proteinExistence type="evidence at transcript level"/>